<keyword id="KW-0004">4Fe-4S</keyword>
<keyword id="KW-0408">Iron</keyword>
<keyword id="KW-0411">Iron-sulfur</keyword>
<keyword id="KW-0414">Isoprene biosynthesis</keyword>
<keyword id="KW-0479">Metal-binding</keyword>
<keyword id="KW-0560">Oxidoreductase</keyword>
<gene>
    <name evidence="1" type="primary">ispG</name>
    <name type="ordered locus">Mmwyl1_1356</name>
</gene>
<reference key="1">
    <citation type="submission" date="2007-06" db="EMBL/GenBank/DDBJ databases">
        <title>Complete sequence of Marinomonas sp. MWYL1.</title>
        <authorList>
            <consortium name="US DOE Joint Genome Institute"/>
            <person name="Copeland A."/>
            <person name="Lucas S."/>
            <person name="Lapidus A."/>
            <person name="Barry K."/>
            <person name="Glavina del Rio T."/>
            <person name="Dalin E."/>
            <person name="Tice H."/>
            <person name="Pitluck S."/>
            <person name="Kiss H."/>
            <person name="Brettin T."/>
            <person name="Bruce D."/>
            <person name="Detter J.C."/>
            <person name="Han C."/>
            <person name="Schmutz J."/>
            <person name="Larimer F."/>
            <person name="Land M."/>
            <person name="Hauser L."/>
            <person name="Kyrpides N."/>
            <person name="Kim E."/>
            <person name="Johnston A.W.B."/>
            <person name="Todd J.D."/>
            <person name="Rogers R."/>
            <person name="Wexler M."/>
            <person name="Bond P.L."/>
            <person name="Li Y."/>
            <person name="Richardson P."/>
        </authorList>
    </citation>
    <scope>NUCLEOTIDE SEQUENCE [LARGE SCALE GENOMIC DNA]</scope>
    <source>
        <strain>MWYL1</strain>
    </source>
</reference>
<organism>
    <name type="scientific">Marinomonas sp. (strain MWYL1)</name>
    <dbReference type="NCBI Taxonomy" id="400668"/>
    <lineage>
        <taxon>Bacteria</taxon>
        <taxon>Pseudomonadati</taxon>
        <taxon>Pseudomonadota</taxon>
        <taxon>Gammaproteobacteria</taxon>
        <taxon>Oceanospirillales</taxon>
        <taxon>Oceanospirillaceae</taxon>
        <taxon>Marinomonas</taxon>
    </lineage>
</organism>
<accession>A6VV06</accession>
<sequence length="370" mass="40507">MHFESPIKRRHSRQIMVGNVPVGGGAPISVQSMTNTETCDVDATVAQIRAIADAGADIVRVSIPSMDAAEAFKKIREAVSIPLVADIHFDYKIALKVAEYGVDCLRINPGNIGNKDRIRAVVDCARDKNIPIRIGVNAGSLEKDLQKKYGEPTPDALVESAFRQIQYFDELDFHEYKLSLKASDIFMTVEAYRKIASQIDNPLHLGITEAGGLRSGTVKSSIGLGLLLMDGIGDTLRVSLAADPVHEIKVGWDMLRSLKLRNRGINFIACPSCSRQNFDVIKTMNELEERLDDITIPMDVAVIGCVVNGPGEAKEADIGLAGGSPNNLIYQDGKPDSKTKNETLVDDLERMIRKKALLKEQELANIIVKN</sequence>
<protein>
    <recommendedName>
        <fullName evidence="1">4-hydroxy-3-methylbut-2-en-1-yl diphosphate synthase (flavodoxin)</fullName>
        <ecNumber evidence="1">1.17.7.3</ecNumber>
    </recommendedName>
    <alternativeName>
        <fullName evidence="1">1-hydroxy-2-methyl-2-(E)-butenyl 4-diphosphate synthase</fullName>
    </alternativeName>
</protein>
<comment type="function">
    <text evidence="1">Converts 2C-methyl-D-erythritol 2,4-cyclodiphosphate (ME-2,4cPP) into 1-hydroxy-2-methyl-2-(E)-butenyl 4-diphosphate.</text>
</comment>
<comment type="catalytic activity">
    <reaction evidence="1">
        <text>(2E)-4-hydroxy-3-methylbut-2-enyl diphosphate + oxidized [flavodoxin] + H2O + 2 H(+) = 2-C-methyl-D-erythritol 2,4-cyclic diphosphate + reduced [flavodoxin]</text>
        <dbReference type="Rhea" id="RHEA:43604"/>
        <dbReference type="Rhea" id="RHEA-COMP:10622"/>
        <dbReference type="Rhea" id="RHEA-COMP:10623"/>
        <dbReference type="ChEBI" id="CHEBI:15377"/>
        <dbReference type="ChEBI" id="CHEBI:15378"/>
        <dbReference type="ChEBI" id="CHEBI:57618"/>
        <dbReference type="ChEBI" id="CHEBI:58210"/>
        <dbReference type="ChEBI" id="CHEBI:58483"/>
        <dbReference type="ChEBI" id="CHEBI:128753"/>
        <dbReference type="EC" id="1.17.7.3"/>
    </reaction>
</comment>
<comment type="cofactor">
    <cofactor evidence="1">
        <name>[4Fe-4S] cluster</name>
        <dbReference type="ChEBI" id="CHEBI:49883"/>
    </cofactor>
    <text evidence="1">Binds 1 [4Fe-4S] cluster.</text>
</comment>
<comment type="pathway">
    <text evidence="1">Isoprenoid biosynthesis; isopentenyl diphosphate biosynthesis via DXP pathway; isopentenyl diphosphate from 1-deoxy-D-xylulose 5-phosphate: step 5/6.</text>
</comment>
<comment type="similarity">
    <text evidence="1">Belongs to the IspG family.</text>
</comment>
<proteinExistence type="inferred from homology"/>
<evidence type="ECO:0000255" key="1">
    <source>
        <dbReference type="HAMAP-Rule" id="MF_00159"/>
    </source>
</evidence>
<dbReference type="EC" id="1.17.7.3" evidence="1"/>
<dbReference type="EMBL" id="CP000749">
    <property type="protein sequence ID" value="ABR70285.1"/>
    <property type="molecule type" value="Genomic_DNA"/>
</dbReference>
<dbReference type="SMR" id="A6VV06"/>
<dbReference type="STRING" id="400668.Mmwyl1_1356"/>
<dbReference type="KEGG" id="mmw:Mmwyl1_1356"/>
<dbReference type="eggNOG" id="COG0821">
    <property type="taxonomic scope" value="Bacteria"/>
</dbReference>
<dbReference type="HOGENOM" id="CLU_042258_0_0_6"/>
<dbReference type="OrthoDB" id="9803214at2"/>
<dbReference type="UniPathway" id="UPA00056">
    <property type="reaction ID" value="UER00096"/>
</dbReference>
<dbReference type="GO" id="GO:0051539">
    <property type="term" value="F:4 iron, 4 sulfur cluster binding"/>
    <property type="evidence" value="ECO:0007669"/>
    <property type="project" value="UniProtKB-UniRule"/>
</dbReference>
<dbReference type="GO" id="GO:0046429">
    <property type="term" value="F:4-hydroxy-3-methylbut-2-en-1-yl diphosphate synthase activity (ferredoxin)"/>
    <property type="evidence" value="ECO:0007669"/>
    <property type="project" value="UniProtKB-UniRule"/>
</dbReference>
<dbReference type="GO" id="GO:0141197">
    <property type="term" value="F:4-hydroxy-3-methylbut-2-enyl-diphosphate synthase activity (flavodoxin)"/>
    <property type="evidence" value="ECO:0007669"/>
    <property type="project" value="UniProtKB-EC"/>
</dbReference>
<dbReference type="GO" id="GO:0005506">
    <property type="term" value="F:iron ion binding"/>
    <property type="evidence" value="ECO:0007669"/>
    <property type="project" value="InterPro"/>
</dbReference>
<dbReference type="GO" id="GO:0019288">
    <property type="term" value="P:isopentenyl diphosphate biosynthetic process, methylerythritol 4-phosphate pathway"/>
    <property type="evidence" value="ECO:0007669"/>
    <property type="project" value="UniProtKB-UniRule"/>
</dbReference>
<dbReference type="GO" id="GO:0016114">
    <property type="term" value="P:terpenoid biosynthetic process"/>
    <property type="evidence" value="ECO:0007669"/>
    <property type="project" value="InterPro"/>
</dbReference>
<dbReference type="FunFam" id="3.20.20.20:FF:000001">
    <property type="entry name" value="4-hydroxy-3-methylbut-2-en-1-yl diphosphate synthase (flavodoxin)"/>
    <property type="match status" value="1"/>
</dbReference>
<dbReference type="Gene3D" id="3.20.20.20">
    <property type="entry name" value="Dihydropteroate synthase-like"/>
    <property type="match status" value="1"/>
</dbReference>
<dbReference type="Gene3D" id="3.30.413.10">
    <property type="entry name" value="Sulfite Reductase Hemoprotein, domain 1"/>
    <property type="match status" value="1"/>
</dbReference>
<dbReference type="HAMAP" id="MF_00159">
    <property type="entry name" value="IspG"/>
    <property type="match status" value="1"/>
</dbReference>
<dbReference type="InterPro" id="IPR011005">
    <property type="entry name" value="Dihydropteroate_synth-like_sf"/>
</dbReference>
<dbReference type="InterPro" id="IPR016425">
    <property type="entry name" value="IspG_bac"/>
</dbReference>
<dbReference type="InterPro" id="IPR004588">
    <property type="entry name" value="IspG_bac-typ"/>
</dbReference>
<dbReference type="InterPro" id="IPR045854">
    <property type="entry name" value="NO2/SO3_Rdtase_4Fe4S_sf"/>
</dbReference>
<dbReference type="NCBIfam" id="TIGR00612">
    <property type="entry name" value="ispG_gcpE"/>
    <property type="match status" value="1"/>
</dbReference>
<dbReference type="NCBIfam" id="NF001540">
    <property type="entry name" value="PRK00366.1"/>
    <property type="match status" value="1"/>
</dbReference>
<dbReference type="PANTHER" id="PTHR30454">
    <property type="entry name" value="4-HYDROXY-3-METHYLBUT-2-EN-1-YL DIPHOSPHATE SYNTHASE"/>
    <property type="match status" value="1"/>
</dbReference>
<dbReference type="PANTHER" id="PTHR30454:SF0">
    <property type="entry name" value="4-HYDROXY-3-METHYLBUT-2-EN-1-YL DIPHOSPHATE SYNTHASE (FERREDOXIN), CHLOROPLASTIC"/>
    <property type="match status" value="1"/>
</dbReference>
<dbReference type="Pfam" id="PF04551">
    <property type="entry name" value="GcpE"/>
    <property type="match status" value="1"/>
</dbReference>
<dbReference type="PIRSF" id="PIRSF004640">
    <property type="entry name" value="IspG"/>
    <property type="match status" value="1"/>
</dbReference>
<dbReference type="SUPFAM" id="SSF51717">
    <property type="entry name" value="Dihydropteroate synthetase-like"/>
    <property type="match status" value="1"/>
</dbReference>
<dbReference type="SUPFAM" id="SSF56014">
    <property type="entry name" value="Nitrite and sulphite reductase 4Fe-4S domain-like"/>
    <property type="match status" value="1"/>
</dbReference>
<feature type="chain" id="PRO_1000076888" description="4-hydroxy-3-methylbut-2-en-1-yl diphosphate synthase (flavodoxin)">
    <location>
        <begin position="1"/>
        <end position="370"/>
    </location>
</feature>
<feature type="binding site" evidence="1">
    <location>
        <position position="270"/>
    </location>
    <ligand>
        <name>[4Fe-4S] cluster</name>
        <dbReference type="ChEBI" id="CHEBI:49883"/>
    </ligand>
</feature>
<feature type="binding site" evidence="1">
    <location>
        <position position="273"/>
    </location>
    <ligand>
        <name>[4Fe-4S] cluster</name>
        <dbReference type="ChEBI" id="CHEBI:49883"/>
    </ligand>
</feature>
<feature type="binding site" evidence="1">
    <location>
        <position position="305"/>
    </location>
    <ligand>
        <name>[4Fe-4S] cluster</name>
        <dbReference type="ChEBI" id="CHEBI:49883"/>
    </ligand>
</feature>
<feature type="binding site" evidence="1">
    <location>
        <position position="312"/>
    </location>
    <ligand>
        <name>[4Fe-4S] cluster</name>
        <dbReference type="ChEBI" id="CHEBI:49883"/>
    </ligand>
</feature>
<name>ISPG_MARMS</name>